<reference key="1">
    <citation type="journal article" date="2000" name="Nature">
        <title>The genome sequence of the thermoacidophilic scavenger Thermoplasma acidophilum.</title>
        <authorList>
            <person name="Ruepp A."/>
            <person name="Graml W."/>
            <person name="Santos-Martinez M.-L."/>
            <person name="Koretke K.K."/>
            <person name="Volker C."/>
            <person name="Mewes H.-W."/>
            <person name="Frishman D."/>
            <person name="Stocker S."/>
            <person name="Lupas A.N."/>
            <person name="Baumeister W."/>
        </authorList>
    </citation>
    <scope>NUCLEOTIDE SEQUENCE [LARGE SCALE GENOMIC DNA]</scope>
    <source>
        <strain>ATCC 25905 / DSM 1728 / JCM 9062 / NBRC 15155 / AMRC-C165</strain>
    </source>
</reference>
<comment type="similarity">
    <text evidence="1">Belongs to the thioesterase PaaI family.</text>
</comment>
<dbReference type="EC" id="3.1.2.-"/>
<dbReference type="EMBL" id="AL445063">
    <property type="protein sequence ID" value="CAC11438.1"/>
    <property type="molecule type" value="Genomic_DNA"/>
</dbReference>
<dbReference type="RefSeq" id="WP_010900722.1">
    <property type="nucleotide sequence ID" value="NC_002578.1"/>
</dbReference>
<dbReference type="SMR" id="Q9HLD5"/>
<dbReference type="FunCoup" id="Q9HLD5">
    <property type="interactions" value="38"/>
</dbReference>
<dbReference type="STRING" id="273075.gene:9571510"/>
<dbReference type="PaxDb" id="273075-Ta0293"/>
<dbReference type="DNASU" id="1455918"/>
<dbReference type="EnsemblBacteria" id="CAC11438">
    <property type="protein sequence ID" value="CAC11438"/>
    <property type="gene ID" value="CAC11438"/>
</dbReference>
<dbReference type="KEGG" id="tac:Ta0293"/>
<dbReference type="eggNOG" id="arCOG00777">
    <property type="taxonomic scope" value="Archaea"/>
</dbReference>
<dbReference type="HOGENOM" id="CLU_089876_3_3_2"/>
<dbReference type="InParanoid" id="Q9HLD5"/>
<dbReference type="OrthoDB" id="24516at2157"/>
<dbReference type="Proteomes" id="UP000001024">
    <property type="component" value="Chromosome"/>
</dbReference>
<dbReference type="GO" id="GO:0047617">
    <property type="term" value="F:fatty acyl-CoA hydrolase activity"/>
    <property type="evidence" value="ECO:0007669"/>
    <property type="project" value="InterPro"/>
</dbReference>
<dbReference type="CDD" id="cd03443">
    <property type="entry name" value="PaaI_thioesterase"/>
    <property type="match status" value="1"/>
</dbReference>
<dbReference type="Gene3D" id="3.10.129.10">
    <property type="entry name" value="Hotdog Thioesterase"/>
    <property type="match status" value="1"/>
</dbReference>
<dbReference type="InterPro" id="IPR039298">
    <property type="entry name" value="ACOT13"/>
</dbReference>
<dbReference type="InterPro" id="IPR029069">
    <property type="entry name" value="HotDog_dom_sf"/>
</dbReference>
<dbReference type="InterPro" id="IPR003736">
    <property type="entry name" value="PAAI_dom"/>
</dbReference>
<dbReference type="InterPro" id="IPR006683">
    <property type="entry name" value="Thioestr_dom"/>
</dbReference>
<dbReference type="NCBIfam" id="TIGR00369">
    <property type="entry name" value="unchar_dom_1"/>
    <property type="match status" value="1"/>
</dbReference>
<dbReference type="PANTHER" id="PTHR21660:SF1">
    <property type="entry name" value="ACYL-COENZYME A THIOESTERASE 13"/>
    <property type="match status" value="1"/>
</dbReference>
<dbReference type="PANTHER" id="PTHR21660">
    <property type="entry name" value="THIOESTERASE SUPERFAMILY MEMBER-RELATED"/>
    <property type="match status" value="1"/>
</dbReference>
<dbReference type="Pfam" id="PF03061">
    <property type="entry name" value="4HBT"/>
    <property type="match status" value="1"/>
</dbReference>
<dbReference type="SUPFAM" id="SSF54637">
    <property type="entry name" value="Thioesterase/thiol ester dehydrase-isomerase"/>
    <property type="match status" value="1"/>
</dbReference>
<keyword id="KW-0378">Hydrolase</keyword>
<keyword id="KW-1185">Reference proteome</keyword>
<gene>
    <name type="ordered locus">Ta0293</name>
</gene>
<feature type="chain" id="PRO_0000156695" description="Putative esterase Ta0293">
    <location>
        <begin position="1"/>
        <end position="132"/>
    </location>
</feature>
<name>Y293_THEAC</name>
<sequence length="132" mass="14493">MFDGEDLKKIFAMDGFLRNIEFEVSYISEGSIEIKVPLKENLMRVGDIMNGGAIMAISDAIGGLTVMTYGSVINQVTVNFNTEFIRPIGTGPVIFRSSMVRIGKNIAYVDVAAIDGNGQLCSKSMGTYYIYR</sequence>
<accession>Q9HLD5</accession>
<evidence type="ECO:0000305" key="1"/>
<proteinExistence type="inferred from homology"/>
<protein>
    <recommendedName>
        <fullName>Putative esterase Ta0293</fullName>
        <ecNumber>3.1.2.-</ecNumber>
    </recommendedName>
</protein>
<organism>
    <name type="scientific">Thermoplasma acidophilum (strain ATCC 25905 / DSM 1728 / JCM 9062 / NBRC 15155 / AMRC-C165)</name>
    <dbReference type="NCBI Taxonomy" id="273075"/>
    <lineage>
        <taxon>Archaea</taxon>
        <taxon>Methanobacteriati</taxon>
        <taxon>Thermoplasmatota</taxon>
        <taxon>Thermoplasmata</taxon>
        <taxon>Thermoplasmatales</taxon>
        <taxon>Thermoplasmataceae</taxon>
        <taxon>Thermoplasma</taxon>
    </lineage>
</organism>